<comment type="function">
    <text evidence="1">Secreted subtilisin-like serine protease with keratinolytic activity that contributes to pathogenicity.</text>
</comment>
<comment type="subcellular location">
    <subcellularLocation>
        <location evidence="4">Secreted</location>
    </subcellularLocation>
</comment>
<comment type="similarity">
    <text evidence="5">Belongs to the peptidase S8 family.</text>
</comment>
<organism>
    <name type="scientific">Trichophyton soudanense</name>
    <dbReference type="NCBI Taxonomy" id="69891"/>
    <lineage>
        <taxon>Eukaryota</taxon>
        <taxon>Fungi</taxon>
        <taxon>Dikarya</taxon>
        <taxon>Ascomycota</taxon>
        <taxon>Pezizomycotina</taxon>
        <taxon>Eurotiomycetes</taxon>
        <taxon>Eurotiomycetidae</taxon>
        <taxon>Onygenales</taxon>
        <taxon>Arthrodermataceae</taxon>
        <taxon>Trichophyton</taxon>
    </lineage>
</organism>
<feature type="signal peptide" evidence="2">
    <location>
        <begin position="1"/>
        <end position="20"/>
    </location>
</feature>
<feature type="propeptide" id="PRO_0000380812" evidence="1">
    <location>
        <begin position="21"/>
        <end position="126"/>
    </location>
</feature>
<feature type="chain" id="PRO_0000380813" description="Subtilisin-like protease 6">
    <location>
        <begin position="127"/>
        <end position="412"/>
    </location>
</feature>
<feature type="domain" description="Inhibitor I9" evidence="2">
    <location>
        <begin position="36"/>
        <end position="120"/>
    </location>
</feature>
<feature type="domain" description="Peptidase S8" evidence="3">
    <location>
        <begin position="135"/>
        <end position="412"/>
    </location>
</feature>
<feature type="active site" description="Charge relay system" evidence="3">
    <location>
        <position position="167"/>
    </location>
</feature>
<feature type="active site" description="Charge relay system" evidence="3">
    <location>
        <position position="198"/>
    </location>
</feature>
<feature type="active site" description="Charge relay system" evidence="3">
    <location>
        <position position="358"/>
    </location>
</feature>
<feature type="glycosylation site" description="N-linked (GlcNAc...) asparagine" evidence="2">
    <location>
        <position position="123"/>
    </location>
</feature>
<feature type="glycosylation site" description="N-linked (GlcNAc...) asparagine" evidence="2">
    <location>
        <position position="126"/>
    </location>
</feature>
<feature type="glycosylation site" description="N-linked (GlcNAc...) asparagine" evidence="2">
    <location>
        <position position="252"/>
    </location>
</feature>
<feature type="glycosylation site" description="N-linked (GlcNAc...) asparagine" evidence="2">
    <location>
        <position position="264"/>
    </location>
</feature>
<feature type="glycosylation site" description="N-linked (GlcNAc...) asparagine" evidence="2">
    <location>
        <position position="408"/>
    </location>
</feature>
<proteinExistence type="evidence at protein level"/>
<sequence length="412" mass="42709">MGFITKAIPIVLAALSTVNGARILEAGPHAEAIPNKYIVVMKREVSDEAFNAHTTWLSQSLNSRIMRRAGSSKPMAGMQDKYSLGGIFRAYSGEFDDAMIKDISSHDDVDFIEPDFVVRTTTNGTNLTHQDNVPSWGLARVGSKKPGGTTYYYDPSAGKGVTAYIIDTGIDIDHEDFQGRAKWGENFVDQQNTDCNGHGTHVAGTVGGTKYGLAKGVSLVAVKVLDCDGSGSNSGVIKGMEWAMRQASGGGNGTAKAAGKSVMNMSLGGPRSEASNQAAKAISDAGIFMAVAAGNENMDAQHSSPASEPSVCTVAASTKDDGKADFSNYGAVVDVYAPGKDITSLKPGGSTDTLSGTSMASPHVCGLGAYLIGLGKQGGPGLCDTIKKMANDVIQSPGEGTTGKLIYNGSGK</sequence>
<name>SUB6_TRISD</name>
<dbReference type="EC" id="3.4.21.-"/>
<dbReference type="EMBL" id="DQ382270">
    <property type="protein sequence ID" value="ABD38556.1"/>
    <property type="molecule type" value="Genomic_DNA"/>
</dbReference>
<dbReference type="SMR" id="A1XIH1"/>
<dbReference type="GlyCosmos" id="A1XIH1">
    <property type="glycosylation" value="5 sites, No reported glycans"/>
</dbReference>
<dbReference type="GO" id="GO:0005576">
    <property type="term" value="C:extracellular region"/>
    <property type="evidence" value="ECO:0007669"/>
    <property type="project" value="UniProtKB-SubCell"/>
</dbReference>
<dbReference type="GO" id="GO:0004252">
    <property type="term" value="F:serine-type endopeptidase activity"/>
    <property type="evidence" value="ECO:0007669"/>
    <property type="project" value="InterPro"/>
</dbReference>
<dbReference type="GO" id="GO:0006508">
    <property type="term" value="P:proteolysis"/>
    <property type="evidence" value="ECO:0007669"/>
    <property type="project" value="UniProtKB-KW"/>
</dbReference>
<dbReference type="CDD" id="cd04077">
    <property type="entry name" value="Peptidases_S8_PCSK9_ProteinaseK_like"/>
    <property type="match status" value="1"/>
</dbReference>
<dbReference type="FunFam" id="3.40.50.200:FF:000014">
    <property type="entry name" value="Proteinase K"/>
    <property type="match status" value="1"/>
</dbReference>
<dbReference type="Gene3D" id="3.30.70.80">
    <property type="entry name" value="Peptidase S8 propeptide/proteinase inhibitor I9"/>
    <property type="match status" value="1"/>
</dbReference>
<dbReference type="Gene3D" id="3.40.50.200">
    <property type="entry name" value="Peptidase S8/S53 domain"/>
    <property type="match status" value="1"/>
</dbReference>
<dbReference type="InterPro" id="IPR034193">
    <property type="entry name" value="PCSK9_ProteinaseK-like"/>
</dbReference>
<dbReference type="InterPro" id="IPR000209">
    <property type="entry name" value="Peptidase_S8/S53_dom"/>
</dbReference>
<dbReference type="InterPro" id="IPR036852">
    <property type="entry name" value="Peptidase_S8/S53_dom_sf"/>
</dbReference>
<dbReference type="InterPro" id="IPR023827">
    <property type="entry name" value="Peptidase_S8_Asp-AS"/>
</dbReference>
<dbReference type="InterPro" id="IPR022398">
    <property type="entry name" value="Peptidase_S8_His-AS"/>
</dbReference>
<dbReference type="InterPro" id="IPR023828">
    <property type="entry name" value="Peptidase_S8_Ser-AS"/>
</dbReference>
<dbReference type="InterPro" id="IPR050131">
    <property type="entry name" value="Peptidase_S8_subtilisin-like"/>
</dbReference>
<dbReference type="InterPro" id="IPR015500">
    <property type="entry name" value="Peptidase_S8_subtilisin-rel"/>
</dbReference>
<dbReference type="InterPro" id="IPR010259">
    <property type="entry name" value="S8pro/Inhibitor_I9"/>
</dbReference>
<dbReference type="InterPro" id="IPR037045">
    <property type="entry name" value="S8pro/Inhibitor_I9_sf"/>
</dbReference>
<dbReference type="PANTHER" id="PTHR43806:SF11">
    <property type="entry name" value="CEREVISIN-RELATED"/>
    <property type="match status" value="1"/>
</dbReference>
<dbReference type="PANTHER" id="PTHR43806">
    <property type="entry name" value="PEPTIDASE S8"/>
    <property type="match status" value="1"/>
</dbReference>
<dbReference type="Pfam" id="PF05922">
    <property type="entry name" value="Inhibitor_I9"/>
    <property type="match status" value="1"/>
</dbReference>
<dbReference type="Pfam" id="PF00082">
    <property type="entry name" value="Peptidase_S8"/>
    <property type="match status" value="1"/>
</dbReference>
<dbReference type="PRINTS" id="PR00723">
    <property type="entry name" value="SUBTILISIN"/>
</dbReference>
<dbReference type="SUPFAM" id="SSF54897">
    <property type="entry name" value="Protease propeptides/inhibitors"/>
    <property type="match status" value="1"/>
</dbReference>
<dbReference type="SUPFAM" id="SSF52743">
    <property type="entry name" value="Subtilisin-like"/>
    <property type="match status" value="1"/>
</dbReference>
<dbReference type="PROSITE" id="PS51892">
    <property type="entry name" value="SUBTILASE"/>
    <property type="match status" value="1"/>
</dbReference>
<dbReference type="PROSITE" id="PS00136">
    <property type="entry name" value="SUBTILASE_ASP"/>
    <property type="match status" value="1"/>
</dbReference>
<dbReference type="PROSITE" id="PS00137">
    <property type="entry name" value="SUBTILASE_HIS"/>
    <property type="match status" value="1"/>
</dbReference>
<dbReference type="PROSITE" id="PS00138">
    <property type="entry name" value="SUBTILASE_SER"/>
    <property type="match status" value="1"/>
</dbReference>
<reference key="1">
    <citation type="journal article" date="2007" name="FEMS Microbiol. Lett.">
        <title>Closely related dermatophyte species produce different patterns of secreted proteins.</title>
        <authorList>
            <person name="Giddey K."/>
            <person name="Favre B."/>
            <person name="Quadroni M."/>
            <person name="Monod M."/>
        </authorList>
    </citation>
    <scope>NUCLEOTIDE SEQUENCE [GENOMIC DNA]</scope>
    <scope>IDENTIFICATION BY MASS SPECTROMETRY</scope>
    <scope>SUBCELLULAR LOCATION</scope>
    <source>
        <strain>LAU 228</strain>
    </source>
</reference>
<evidence type="ECO:0000250" key="1"/>
<evidence type="ECO:0000255" key="2"/>
<evidence type="ECO:0000255" key="3">
    <source>
        <dbReference type="PROSITE-ProRule" id="PRU01240"/>
    </source>
</evidence>
<evidence type="ECO:0000269" key="4">
    <source>
    </source>
</evidence>
<evidence type="ECO:0000305" key="5"/>
<accession>A1XIH1</accession>
<keyword id="KW-0325">Glycoprotein</keyword>
<keyword id="KW-0378">Hydrolase</keyword>
<keyword id="KW-0645">Protease</keyword>
<keyword id="KW-0964">Secreted</keyword>
<keyword id="KW-0720">Serine protease</keyword>
<keyword id="KW-0732">Signal</keyword>
<keyword id="KW-0843">Virulence</keyword>
<keyword id="KW-0865">Zymogen</keyword>
<protein>
    <recommendedName>
        <fullName>Subtilisin-like protease 6</fullName>
        <ecNumber>3.4.21.-</ecNumber>
    </recommendedName>
</protein>
<gene>
    <name type="primary">SUB6</name>
</gene>